<keyword id="KW-0028">Amino-acid biosynthesis</keyword>
<keyword id="KW-0963">Cytoplasm</keyword>
<keyword id="KW-0220">Diaminopimelate biosynthesis</keyword>
<keyword id="KW-0456">Lyase</keyword>
<keyword id="KW-0457">Lysine biosynthesis</keyword>
<keyword id="KW-0704">Schiff base</keyword>
<feature type="chain" id="PRO_1000050244" description="4-hydroxy-tetrahydrodipicolinate synthase">
    <location>
        <begin position="1"/>
        <end position="300"/>
    </location>
</feature>
<feature type="active site" description="Proton donor/acceptor" evidence="1">
    <location>
        <position position="145"/>
    </location>
</feature>
<feature type="active site" description="Schiff-base intermediate with substrate" evidence="1">
    <location>
        <position position="173"/>
    </location>
</feature>
<feature type="binding site" evidence="1">
    <location>
        <position position="56"/>
    </location>
    <ligand>
        <name>pyruvate</name>
        <dbReference type="ChEBI" id="CHEBI:15361"/>
    </ligand>
</feature>
<feature type="binding site" evidence="1">
    <location>
        <position position="215"/>
    </location>
    <ligand>
        <name>pyruvate</name>
        <dbReference type="ChEBI" id="CHEBI:15361"/>
    </ligand>
</feature>
<feature type="site" description="Part of a proton relay during catalysis" evidence="1">
    <location>
        <position position="55"/>
    </location>
</feature>
<feature type="site" description="Part of a proton relay during catalysis" evidence="1">
    <location>
        <position position="118"/>
    </location>
</feature>
<organism>
    <name type="scientific">Prochlorococcus marinus (strain AS9601)</name>
    <dbReference type="NCBI Taxonomy" id="146891"/>
    <lineage>
        <taxon>Bacteria</taxon>
        <taxon>Bacillati</taxon>
        <taxon>Cyanobacteriota</taxon>
        <taxon>Cyanophyceae</taxon>
        <taxon>Synechococcales</taxon>
        <taxon>Prochlorococcaceae</taxon>
        <taxon>Prochlorococcus</taxon>
    </lineage>
</organism>
<reference key="1">
    <citation type="journal article" date="2007" name="PLoS Genet.">
        <title>Patterns and implications of gene gain and loss in the evolution of Prochlorococcus.</title>
        <authorList>
            <person name="Kettler G.C."/>
            <person name="Martiny A.C."/>
            <person name="Huang K."/>
            <person name="Zucker J."/>
            <person name="Coleman M.L."/>
            <person name="Rodrigue S."/>
            <person name="Chen F."/>
            <person name="Lapidus A."/>
            <person name="Ferriera S."/>
            <person name="Johnson J."/>
            <person name="Steglich C."/>
            <person name="Church G.M."/>
            <person name="Richardson P."/>
            <person name="Chisholm S.W."/>
        </authorList>
    </citation>
    <scope>NUCLEOTIDE SEQUENCE [LARGE SCALE GENOMIC DNA]</scope>
    <source>
        <strain>AS9601</strain>
    </source>
</reference>
<proteinExistence type="inferred from homology"/>
<dbReference type="EC" id="4.3.3.7" evidence="1"/>
<dbReference type="EMBL" id="CP000551">
    <property type="protein sequence ID" value="ABM71145.1"/>
    <property type="molecule type" value="Genomic_DNA"/>
</dbReference>
<dbReference type="RefSeq" id="WP_011819263.1">
    <property type="nucleotide sequence ID" value="NC_008816.1"/>
</dbReference>
<dbReference type="SMR" id="A2BTN4"/>
<dbReference type="STRING" id="146891.A9601_18621"/>
<dbReference type="KEGG" id="pmb:A9601_18621"/>
<dbReference type="eggNOG" id="COG0329">
    <property type="taxonomic scope" value="Bacteria"/>
</dbReference>
<dbReference type="HOGENOM" id="CLU_049343_7_1_3"/>
<dbReference type="OrthoDB" id="9782828at2"/>
<dbReference type="UniPathway" id="UPA00034">
    <property type="reaction ID" value="UER00017"/>
</dbReference>
<dbReference type="Proteomes" id="UP000002590">
    <property type="component" value="Chromosome"/>
</dbReference>
<dbReference type="GO" id="GO:0005829">
    <property type="term" value="C:cytosol"/>
    <property type="evidence" value="ECO:0007669"/>
    <property type="project" value="TreeGrafter"/>
</dbReference>
<dbReference type="GO" id="GO:0008840">
    <property type="term" value="F:4-hydroxy-tetrahydrodipicolinate synthase activity"/>
    <property type="evidence" value="ECO:0007669"/>
    <property type="project" value="UniProtKB-UniRule"/>
</dbReference>
<dbReference type="GO" id="GO:0019877">
    <property type="term" value="P:diaminopimelate biosynthetic process"/>
    <property type="evidence" value="ECO:0007669"/>
    <property type="project" value="UniProtKB-UniRule"/>
</dbReference>
<dbReference type="GO" id="GO:0009089">
    <property type="term" value="P:lysine biosynthetic process via diaminopimelate"/>
    <property type="evidence" value="ECO:0007669"/>
    <property type="project" value="UniProtKB-UniRule"/>
</dbReference>
<dbReference type="CDD" id="cd00950">
    <property type="entry name" value="DHDPS"/>
    <property type="match status" value="1"/>
</dbReference>
<dbReference type="Gene3D" id="3.20.20.70">
    <property type="entry name" value="Aldolase class I"/>
    <property type="match status" value="1"/>
</dbReference>
<dbReference type="HAMAP" id="MF_00418">
    <property type="entry name" value="DapA"/>
    <property type="match status" value="1"/>
</dbReference>
<dbReference type="InterPro" id="IPR013785">
    <property type="entry name" value="Aldolase_TIM"/>
</dbReference>
<dbReference type="InterPro" id="IPR005263">
    <property type="entry name" value="DapA"/>
</dbReference>
<dbReference type="InterPro" id="IPR002220">
    <property type="entry name" value="DapA-like"/>
</dbReference>
<dbReference type="InterPro" id="IPR020625">
    <property type="entry name" value="Schiff_base-form_aldolases_AS"/>
</dbReference>
<dbReference type="InterPro" id="IPR020624">
    <property type="entry name" value="Schiff_base-form_aldolases_CS"/>
</dbReference>
<dbReference type="NCBIfam" id="TIGR00674">
    <property type="entry name" value="dapA"/>
    <property type="match status" value="1"/>
</dbReference>
<dbReference type="PANTHER" id="PTHR12128:SF66">
    <property type="entry name" value="4-HYDROXY-2-OXOGLUTARATE ALDOLASE, MITOCHONDRIAL"/>
    <property type="match status" value="1"/>
</dbReference>
<dbReference type="PANTHER" id="PTHR12128">
    <property type="entry name" value="DIHYDRODIPICOLINATE SYNTHASE"/>
    <property type="match status" value="1"/>
</dbReference>
<dbReference type="Pfam" id="PF00701">
    <property type="entry name" value="DHDPS"/>
    <property type="match status" value="1"/>
</dbReference>
<dbReference type="PIRSF" id="PIRSF001365">
    <property type="entry name" value="DHDPS"/>
    <property type="match status" value="1"/>
</dbReference>
<dbReference type="PRINTS" id="PR00146">
    <property type="entry name" value="DHPICSNTHASE"/>
</dbReference>
<dbReference type="SMART" id="SM01130">
    <property type="entry name" value="DHDPS"/>
    <property type="match status" value="1"/>
</dbReference>
<dbReference type="SUPFAM" id="SSF51569">
    <property type="entry name" value="Aldolase"/>
    <property type="match status" value="1"/>
</dbReference>
<dbReference type="PROSITE" id="PS00665">
    <property type="entry name" value="DHDPS_1"/>
    <property type="match status" value="1"/>
</dbReference>
<dbReference type="PROSITE" id="PS00666">
    <property type="entry name" value="DHDPS_2"/>
    <property type="match status" value="1"/>
</dbReference>
<protein>
    <recommendedName>
        <fullName evidence="1">4-hydroxy-tetrahydrodipicolinate synthase</fullName>
        <shortName evidence="1">HTPA synthase</shortName>
        <ecNumber evidence="1">4.3.3.7</ecNumber>
    </recommendedName>
</protein>
<sequence>MITDKTECNNPLFGRILTAMVTPFTENGDVDYELAIKLSNYLFENGSDGIVLCGTTGESPTLSWAEQHDLFIAVKGSLDASCKVIVGTGSNCTSEAVEATKKAYDSGADGALVVVPYYNKPPQEGLYKHFSSIAKSAKDLPLMLYNIPGRTGCNLLPDTVKKLMDFSNILSIKAASGRIEEVTELRAICGSELSVYSGDDSLLLPMLSVGAVGVVSVASHLVGLQLKEMIHSFQSGKVSNALAIHEKLQPLFKALFMTTNPIPIKAALELSGWDVGNPRSPLSPLNNDMKKQLSFILNSL</sequence>
<accession>A2BTN4</accession>
<evidence type="ECO:0000255" key="1">
    <source>
        <dbReference type="HAMAP-Rule" id="MF_00418"/>
    </source>
</evidence>
<evidence type="ECO:0000305" key="2"/>
<comment type="function">
    <text evidence="1">Catalyzes the condensation of (S)-aspartate-beta-semialdehyde [(S)-ASA] and pyruvate to 4-hydroxy-tetrahydrodipicolinate (HTPA).</text>
</comment>
<comment type="catalytic activity">
    <reaction evidence="1">
        <text>L-aspartate 4-semialdehyde + pyruvate = (2S,4S)-4-hydroxy-2,3,4,5-tetrahydrodipicolinate + H2O + H(+)</text>
        <dbReference type="Rhea" id="RHEA:34171"/>
        <dbReference type="ChEBI" id="CHEBI:15361"/>
        <dbReference type="ChEBI" id="CHEBI:15377"/>
        <dbReference type="ChEBI" id="CHEBI:15378"/>
        <dbReference type="ChEBI" id="CHEBI:67139"/>
        <dbReference type="ChEBI" id="CHEBI:537519"/>
        <dbReference type="EC" id="4.3.3.7"/>
    </reaction>
</comment>
<comment type="pathway">
    <text evidence="1">Amino-acid biosynthesis; L-lysine biosynthesis via DAP pathway; (S)-tetrahydrodipicolinate from L-aspartate: step 3/4.</text>
</comment>
<comment type="subunit">
    <text evidence="1">Homotetramer; dimer of dimers.</text>
</comment>
<comment type="subcellular location">
    <subcellularLocation>
        <location evidence="1">Cytoplasm</location>
    </subcellularLocation>
</comment>
<comment type="similarity">
    <text evidence="1">Belongs to the DapA family.</text>
</comment>
<comment type="caution">
    <text evidence="2">Was originally thought to be a dihydrodipicolinate synthase (DHDPS), catalyzing the condensation of (S)-aspartate-beta-semialdehyde [(S)-ASA] and pyruvate to dihydrodipicolinate (DHDP). However, it was shown in E.coli that the product of the enzymatic reaction is not dihydrodipicolinate but in fact (4S)-4-hydroxy-2,3,4,5-tetrahydro-(2S)-dipicolinic acid (HTPA), and that the consecutive dehydration reaction leading to DHDP is not spontaneous but catalyzed by DapB.</text>
</comment>
<name>DAPA_PROMS</name>
<gene>
    <name evidence="1" type="primary">dapA</name>
    <name type="ordered locus">A9601_18621</name>
</gene>